<name>AATB_SULTO</name>
<organism>
    <name type="scientific">Sulfurisphaera tokodaii (strain DSM 16993 / JCM 10545 / NBRC 100140 / 7)</name>
    <name type="common">Sulfolobus tokodaii</name>
    <dbReference type="NCBI Taxonomy" id="273063"/>
    <lineage>
        <taxon>Archaea</taxon>
        <taxon>Thermoproteota</taxon>
        <taxon>Thermoprotei</taxon>
        <taxon>Sulfolobales</taxon>
        <taxon>Sulfolobaceae</taxon>
        <taxon>Sulfurisphaera</taxon>
    </lineage>
</organism>
<keyword id="KW-0066">ATP synthesis</keyword>
<keyword id="KW-1003">Cell membrane</keyword>
<keyword id="KW-0375">Hydrogen ion transport</keyword>
<keyword id="KW-0406">Ion transport</keyword>
<keyword id="KW-0472">Membrane</keyword>
<keyword id="KW-1185">Reference proteome</keyword>
<keyword id="KW-0813">Transport</keyword>
<protein>
    <recommendedName>
        <fullName evidence="1">A-type ATP synthase subunit B</fullName>
    </recommendedName>
    <alternativeName>
        <fullName evidence="2">ATP synthase beta subunit</fullName>
    </alternativeName>
</protein>
<dbReference type="EMBL" id="AH003164">
    <property type="protein sequence ID" value="AAA72702.1"/>
    <property type="molecule type" value="Genomic_DNA"/>
</dbReference>
<dbReference type="EMBL" id="BA000023">
    <property type="protein sequence ID" value="BAK54573.1"/>
    <property type="molecule type" value="Genomic_DNA"/>
</dbReference>
<dbReference type="PIR" id="A32118">
    <property type="entry name" value="A32118"/>
</dbReference>
<dbReference type="RefSeq" id="WP_010979482.1">
    <property type="nucleotide sequence ID" value="NC_003106.2"/>
</dbReference>
<dbReference type="SMR" id="Q971B6"/>
<dbReference type="STRING" id="273063.STK_14370"/>
<dbReference type="GeneID" id="1459468"/>
<dbReference type="KEGG" id="sto:STK_14370"/>
<dbReference type="PATRIC" id="fig|273063.9.peg.1637"/>
<dbReference type="eggNOG" id="arCOG00865">
    <property type="taxonomic scope" value="Archaea"/>
</dbReference>
<dbReference type="OrthoDB" id="32941at2157"/>
<dbReference type="Proteomes" id="UP000001015">
    <property type="component" value="Chromosome"/>
</dbReference>
<dbReference type="GO" id="GO:0005886">
    <property type="term" value="C:plasma membrane"/>
    <property type="evidence" value="ECO:0007669"/>
    <property type="project" value="UniProtKB-SubCell"/>
</dbReference>
<dbReference type="GO" id="GO:0033178">
    <property type="term" value="C:proton-transporting two-sector ATPase complex, catalytic domain"/>
    <property type="evidence" value="ECO:0007669"/>
    <property type="project" value="InterPro"/>
</dbReference>
<dbReference type="GO" id="GO:0005524">
    <property type="term" value="F:ATP binding"/>
    <property type="evidence" value="ECO:0007669"/>
    <property type="project" value="UniProtKB-UniRule"/>
</dbReference>
<dbReference type="GO" id="GO:0046933">
    <property type="term" value="F:proton-transporting ATP synthase activity, rotational mechanism"/>
    <property type="evidence" value="ECO:0007669"/>
    <property type="project" value="UniProtKB-UniRule"/>
</dbReference>
<dbReference type="GO" id="GO:0046961">
    <property type="term" value="F:proton-transporting ATPase activity, rotational mechanism"/>
    <property type="evidence" value="ECO:0007669"/>
    <property type="project" value="TreeGrafter"/>
</dbReference>
<dbReference type="GO" id="GO:0042777">
    <property type="term" value="P:proton motive force-driven plasma membrane ATP synthesis"/>
    <property type="evidence" value="ECO:0007669"/>
    <property type="project" value="UniProtKB-UniRule"/>
</dbReference>
<dbReference type="CDD" id="cd18112">
    <property type="entry name" value="ATP-synt_V_A-type_beta_C"/>
    <property type="match status" value="1"/>
</dbReference>
<dbReference type="CDD" id="cd18118">
    <property type="entry name" value="ATP-synt_V_A-type_beta_N"/>
    <property type="match status" value="1"/>
</dbReference>
<dbReference type="CDD" id="cd01135">
    <property type="entry name" value="V_A-ATPase_B"/>
    <property type="match status" value="1"/>
</dbReference>
<dbReference type="Gene3D" id="3.40.50.12240">
    <property type="match status" value="1"/>
</dbReference>
<dbReference type="HAMAP" id="MF_00310">
    <property type="entry name" value="ATP_synth_B_arch"/>
    <property type="match status" value="1"/>
</dbReference>
<dbReference type="InterPro" id="IPR055190">
    <property type="entry name" value="ATP-synt_VA_C"/>
</dbReference>
<dbReference type="InterPro" id="IPR020003">
    <property type="entry name" value="ATPase_a/bsu_AS"/>
</dbReference>
<dbReference type="InterPro" id="IPR005724">
    <property type="entry name" value="ATPase_A1-cplx_bsu"/>
</dbReference>
<dbReference type="InterPro" id="IPR004100">
    <property type="entry name" value="ATPase_F1/V1/A1_a/bsu_N"/>
</dbReference>
<dbReference type="InterPro" id="IPR000194">
    <property type="entry name" value="ATPase_F1/V1/A1_a/bsu_nucl-bd"/>
</dbReference>
<dbReference type="InterPro" id="IPR027417">
    <property type="entry name" value="P-loop_NTPase"/>
</dbReference>
<dbReference type="InterPro" id="IPR022879">
    <property type="entry name" value="V-ATPase_su_B/beta"/>
</dbReference>
<dbReference type="NCBIfam" id="TIGR01041">
    <property type="entry name" value="ATP_syn_B_arch"/>
    <property type="match status" value="1"/>
</dbReference>
<dbReference type="NCBIfam" id="NF003235">
    <property type="entry name" value="PRK04196.1"/>
    <property type="match status" value="1"/>
</dbReference>
<dbReference type="PANTHER" id="PTHR43389">
    <property type="entry name" value="V-TYPE PROTON ATPASE SUBUNIT B"/>
    <property type="match status" value="1"/>
</dbReference>
<dbReference type="PANTHER" id="PTHR43389:SF4">
    <property type="entry name" value="V-TYPE PROTON ATPASE SUBUNIT B"/>
    <property type="match status" value="1"/>
</dbReference>
<dbReference type="Pfam" id="PF00006">
    <property type="entry name" value="ATP-synt_ab"/>
    <property type="match status" value="1"/>
</dbReference>
<dbReference type="Pfam" id="PF02874">
    <property type="entry name" value="ATP-synt_ab_N"/>
    <property type="match status" value="1"/>
</dbReference>
<dbReference type="Pfam" id="PF22919">
    <property type="entry name" value="ATP-synt_VA_C"/>
    <property type="match status" value="1"/>
</dbReference>
<dbReference type="PIRSF" id="PIRSF039114">
    <property type="entry name" value="V-ATPsynth_beta/V-ATPase_B"/>
    <property type="match status" value="1"/>
</dbReference>
<dbReference type="SUPFAM" id="SSF47917">
    <property type="entry name" value="C-terminal domain of alpha and beta subunits of F1 ATP synthase"/>
    <property type="match status" value="1"/>
</dbReference>
<dbReference type="SUPFAM" id="SSF52540">
    <property type="entry name" value="P-loop containing nucleoside triphosphate hydrolases"/>
    <property type="match status" value="1"/>
</dbReference>
<dbReference type="PROSITE" id="PS00152">
    <property type="entry name" value="ATPASE_ALPHA_BETA"/>
    <property type="match status" value="1"/>
</dbReference>
<gene>
    <name evidence="1" type="primary">atpB</name>
    <name type="ordered locus">STK_14370</name>
</gene>
<evidence type="ECO:0000255" key="1">
    <source>
        <dbReference type="HAMAP-Rule" id="MF_00310"/>
    </source>
</evidence>
<evidence type="ECO:0000303" key="2">
    <source>
    </source>
</evidence>
<evidence type="ECO:0000305" key="3"/>
<evidence type="ECO:0000305" key="4">
    <source>
    </source>
</evidence>
<reference key="1">
    <citation type="journal article" date="1988" name="J. Biol. Chem.">
        <title>Molecular cloning of the beta-subunit of a possible non-F0F1 type ATP synthase from the acidothermophilic archaebacterium, Sulfolobus acidocaldarius.</title>
        <authorList>
            <person name="Denda K."/>
            <person name="Konishi J."/>
            <person name="Oshima T."/>
            <person name="Date T."/>
            <person name="Yoshida M."/>
        </authorList>
    </citation>
    <scope>NUCLEOTIDE SEQUENCE [GENOMIC DNA]</scope>
</reference>
<reference key="2">
    <citation type="journal article" date="2001" name="DNA Res.">
        <title>Complete genome sequence of an aerobic thermoacidophilic Crenarchaeon, Sulfolobus tokodaii strain7.</title>
        <authorList>
            <person name="Kawarabayasi Y."/>
            <person name="Hino Y."/>
            <person name="Horikawa H."/>
            <person name="Jin-no K."/>
            <person name="Takahashi M."/>
            <person name="Sekine M."/>
            <person name="Baba S."/>
            <person name="Ankai A."/>
            <person name="Kosugi H."/>
            <person name="Hosoyama A."/>
            <person name="Fukui S."/>
            <person name="Nagai Y."/>
            <person name="Nishijima K."/>
            <person name="Otsuka R."/>
            <person name="Nakazawa H."/>
            <person name="Takamiya M."/>
            <person name="Kato Y."/>
            <person name="Yoshizawa T."/>
            <person name="Tanaka T."/>
            <person name="Kudoh Y."/>
            <person name="Yamazaki J."/>
            <person name="Kushida N."/>
            <person name="Oguchi A."/>
            <person name="Aoki K."/>
            <person name="Masuda S."/>
            <person name="Yanagii M."/>
            <person name="Nishimura M."/>
            <person name="Yamagishi A."/>
            <person name="Oshima T."/>
            <person name="Kikuchi H."/>
        </authorList>
    </citation>
    <scope>NUCLEOTIDE SEQUENCE [LARGE SCALE GENOMIC DNA]</scope>
    <source>
        <strain>DSM 16993 / JCM 10545 / NBRC 100140 / 7</strain>
    </source>
</reference>
<proteinExistence type="inferred from homology"/>
<sequence length="465" mass="51317">MSLLNVREYSNISMIKGPLIAVQGVSDAAYNELVEIEMPDGSKRRGLVVDSQMGVTFVQVFEGTTGISPTGSKVRFLGRGLEVKISEEMLGRIFNPLGEPLDNGPPVIGGEKRNINGDPINPATREYPEEFIQTGISAIDGLNSLLRGQKLPIFSGSGLPANTLAAQIAKQATVRGEESNFAVVFAAIGVRYDEALFFRKFFEETGAINRVAMFVTLANDPPSLKILTPKTALTLAEYLAFEKDMHVLAILIDMTNYCEALRELSASREEVPGRGGYPGYMYTDLATIYERAGKVIGKKGSITQMPILTMPNDDMTHPIPDLTGYITEGQIVLDRSLFNKGIYPPINVLMSLSRLMKDGIGEGKTRDDHKDLSNQLFAAYARAQDIRGLAAIIGEDSLSEVDRKYLLFAEAFERRFVAQGVNENRSIETTLDIGWEVLSILPESELSLIRSEYIKKYHPNYRGKK</sequence>
<comment type="function">
    <text evidence="1">Component of the A-type ATP synthase that produces ATP from ADP in the presence of a proton gradient across the membrane. The B chain is a regulatory subunit.</text>
</comment>
<comment type="subunit">
    <text evidence="1">Has multiple subunits with at least A(3), B(3), C, D, E, F, H, I and proteolipid K(x).</text>
</comment>
<comment type="subcellular location">
    <subcellularLocation>
        <location evidence="1">Cell membrane</location>
        <topology evidence="1">Peripheral membrane protein</topology>
    </subcellularLocation>
</comment>
<comment type="similarity">
    <text evidence="1">Belongs to the ATPase alpha/beta chains family.</text>
</comment>
<comment type="caution">
    <text evidence="4">Was originally reported as originating from S.acidocaldarius.</text>
</comment>
<feature type="chain" id="PRO_0000144668" description="A-type ATP synthase subunit B">
    <location>
        <begin position="1"/>
        <end position="465"/>
    </location>
</feature>
<feature type="sequence conflict" description="In Ref. 1; AAA72702." evidence="3" ref="1">
    <original>QKLPIF</original>
    <variation>SKITDL</variation>
    <location>
        <begin position="149"/>
        <end position="154"/>
    </location>
</feature>
<accession>Q971B6</accession>
<accession>F9VNC7</accession>
<accession>P13052</accession>